<sequence length="150" mass="16349">MRVWIDADACPKAARDLIVKFALKRKFEVVMVAGQAVAKPAFAIVRLIVVPSGMDAADDYLVEHAVPGELVICSDVPLADRLVKKGVAALDPRGREFDERNMGDRLAARNLFTELREQGQVGGGQGAYGEREKQAFANALDRIIARLSKS</sequence>
<dbReference type="EMBL" id="CP000926">
    <property type="protein sequence ID" value="ABZ01164.1"/>
    <property type="molecule type" value="Genomic_DNA"/>
</dbReference>
<dbReference type="RefSeq" id="WP_012274773.1">
    <property type="nucleotide sequence ID" value="NC_010322.1"/>
</dbReference>
<dbReference type="SMR" id="B0KPA6"/>
<dbReference type="KEGG" id="ppg:PputGB1_5282"/>
<dbReference type="eggNOG" id="COG1671">
    <property type="taxonomic scope" value="Bacteria"/>
</dbReference>
<dbReference type="HOGENOM" id="CLU_106619_2_1_6"/>
<dbReference type="Proteomes" id="UP000002157">
    <property type="component" value="Chromosome"/>
</dbReference>
<dbReference type="CDD" id="cd18720">
    <property type="entry name" value="PIN_YqxD-like"/>
    <property type="match status" value="1"/>
</dbReference>
<dbReference type="HAMAP" id="MF_00489">
    <property type="entry name" value="UPF0178"/>
    <property type="match status" value="1"/>
</dbReference>
<dbReference type="InterPro" id="IPR003791">
    <property type="entry name" value="UPF0178"/>
</dbReference>
<dbReference type="NCBIfam" id="NF001095">
    <property type="entry name" value="PRK00124.1"/>
    <property type="match status" value="1"/>
</dbReference>
<dbReference type="PANTHER" id="PTHR35146">
    <property type="entry name" value="UPF0178 PROTEIN YAII"/>
    <property type="match status" value="1"/>
</dbReference>
<dbReference type="PANTHER" id="PTHR35146:SF1">
    <property type="entry name" value="UPF0178 PROTEIN YAII"/>
    <property type="match status" value="1"/>
</dbReference>
<dbReference type="Pfam" id="PF02639">
    <property type="entry name" value="DUF188"/>
    <property type="match status" value="1"/>
</dbReference>
<proteinExistence type="inferred from homology"/>
<gene>
    <name type="ordered locus">PputGB1_5282</name>
</gene>
<evidence type="ECO:0000255" key="1">
    <source>
        <dbReference type="HAMAP-Rule" id="MF_00489"/>
    </source>
</evidence>
<organism>
    <name type="scientific">Pseudomonas putida (strain GB-1)</name>
    <dbReference type="NCBI Taxonomy" id="76869"/>
    <lineage>
        <taxon>Bacteria</taxon>
        <taxon>Pseudomonadati</taxon>
        <taxon>Pseudomonadota</taxon>
        <taxon>Gammaproteobacteria</taxon>
        <taxon>Pseudomonadales</taxon>
        <taxon>Pseudomonadaceae</taxon>
        <taxon>Pseudomonas</taxon>
    </lineage>
</organism>
<feature type="chain" id="PRO_1000081381" description="UPF0178 protein PputGB1_5282">
    <location>
        <begin position="1"/>
        <end position="150"/>
    </location>
</feature>
<protein>
    <recommendedName>
        <fullName evidence="1">UPF0178 protein PputGB1_5282</fullName>
    </recommendedName>
</protein>
<name>Y5282_PSEPG</name>
<comment type="similarity">
    <text evidence="1">Belongs to the UPF0178 family.</text>
</comment>
<accession>B0KPA6</accession>
<reference key="1">
    <citation type="submission" date="2008-01" db="EMBL/GenBank/DDBJ databases">
        <title>Complete sequence of Pseudomonas putida GB-1.</title>
        <authorList>
            <consortium name="US DOE Joint Genome Institute"/>
            <person name="Copeland A."/>
            <person name="Lucas S."/>
            <person name="Lapidus A."/>
            <person name="Barry K."/>
            <person name="Glavina del Rio T."/>
            <person name="Dalin E."/>
            <person name="Tice H."/>
            <person name="Pitluck S."/>
            <person name="Bruce D."/>
            <person name="Goodwin L."/>
            <person name="Chertkov O."/>
            <person name="Brettin T."/>
            <person name="Detter J.C."/>
            <person name="Han C."/>
            <person name="Kuske C.R."/>
            <person name="Schmutz J."/>
            <person name="Larimer F."/>
            <person name="Land M."/>
            <person name="Hauser L."/>
            <person name="Kyrpides N."/>
            <person name="Kim E."/>
            <person name="McCarthy J.K."/>
            <person name="Richardson P."/>
        </authorList>
    </citation>
    <scope>NUCLEOTIDE SEQUENCE [LARGE SCALE GENOMIC DNA]</scope>
    <source>
        <strain>GB-1</strain>
    </source>
</reference>